<organism>
    <name type="scientific">Mycobacterium tuberculosis (strain ATCC 25618 / H37Rv)</name>
    <dbReference type="NCBI Taxonomy" id="83332"/>
    <lineage>
        <taxon>Bacteria</taxon>
        <taxon>Bacillati</taxon>
        <taxon>Actinomycetota</taxon>
        <taxon>Actinomycetes</taxon>
        <taxon>Mycobacteriales</taxon>
        <taxon>Mycobacteriaceae</taxon>
        <taxon>Mycobacterium</taxon>
        <taxon>Mycobacterium tuberculosis complex</taxon>
    </lineage>
</organism>
<gene>
    <name evidence="1" type="primary">argD</name>
    <name type="ordered locus">Rv1655</name>
    <name type="ORF">MTCY06H11.20</name>
</gene>
<comment type="catalytic activity">
    <reaction evidence="1">
        <text>N(2)-acetyl-L-ornithine + 2-oxoglutarate = N-acetyl-L-glutamate 5-semialdehyde + L-glutamate</text>
        <dbReference type="Rhea" id="RHEA:18049"/>
        <dbReference type="ChEBI" id="CHEBI:16810"/>
        <dbReference type="ChEBI" id="CHEBI:29123"/>
        <dbReference type="ChEBI" id="CHEBI:29985"/>
        <dbReference type="ChEBI" id="CHEBI:57805"/>
        <dbReference type="EC" id="2.6.1.11"/>
    </reaction>
</comment>
<comment type="cofactor">
    <cofactor evidence="1">
        <name>pyridoxal 5'-phosphate</name>
        <dbReference type="ChEBI" id="CHEBI:597326"/>
    </cofactor>
    <text evidence="1">Binds 1 pyridoxal phosphate per subunit.</text>
</comment>
<comment type="pathway">
    <text evidence="1">Amino-acid biosynthesis; L-arginine biosynthesis; N(2)-acetyl-L-ornithine from L-glutamate: step 4/4.</text>
</comment>
<comment type="subunit">
    <text evidence="1">Homodimer.</text>
</comment>
<comment type="subcellular location">
    <subcellularLocation>
        <location evidence="1">Cytoplasm</location>
    </subcellularLocation>
</comment>
<comment type="miscellaneous">
    <text evidence="1">May also have succinyldiaminopimelate aminotransferase activity, thus carrying out the corresponding step in lysine biosynthesis.</text>
</comment>
<comment type="miscellaneous">
    <text>Was identified as a high-confidence drug target.</text>
</comment>
<comment type="similarity">
    <text evidence="1">Belongs to the class-III pyridoxal-phosphate-dependent aminotransferase family. ArgD subfamily.</text>
</comment>
<reference key="1">
    <citation type="journal article" date="1998" name="Nature">
        <title>Deciphering the biology of Mycobacterium tuberculosis from the complete genome sequence.</title>
        <authorList>
            <person name="Cole S.T."/>
            <person name="Brosch R."/>
            <person name="Parkhill J."/>
            <person name="Garnier T."/>
            <person name="Churcher C.M."/>
            <person name="Harris D.E."/>
            <person name="Gordon S.V."/>
            <person name="Eiglmeier K."/>
            <person name="Gas S."/>
            <person name="Barry C.E. III"/>
            <person name="Tekaia F."/>
            <person name="Badcock K."/>
            <person name="Basham D."/>
            <person name="Brown D."/>
            <person name="Chillingworth T."/>
            <person name="Connor R."/>
            <person name="Davies R.M."/>
            <person name="Devlin K."/>
            <person name="Feltwell T."/>
            <person name="Gentles S."/>
            <person name="Hamlin N."/>
            <person name="Holroyd S."/>
            <person name="Hornsby T."/>
            <person name="Jagels K."/>
            <person name="Krogh A."/>
            <person name="McLean J."/>
            <person name="Moule S."/>
            <person name="Murphy L.D."/>
            <person name="Oliver S."/>
            <person name="Osborne J."/>
            <person name="Quail M.A."/>
            <person name="Rajandream M.A."/>
            <person name="Rogers J."/>
            <person name="Rutter S."/>
            <person name="Seeger K."/>
            <person name="Skelton S."/>
            <person name="Squares S."/>
            <person name="Squares R."/>
            <person name="Sulston J.E."/>
            <person name="Taylor K."/>
            <person name="Whitehead S."/>
            <person name="Barrell B.G."/>
        </authorList>
    </citation>
    <scope>NUCLEOTIDE SEQUENCE [LARGE SCALE GENOMIC DNA]</scope>
    <source>
        <strain>ATCC 25618 / H37Rv</strain>
    </source>
</reference>
<reference key="2">
    <citation type="journal article" date="2007" name="Microbiology">
        <title>Experimental determination of translational starts using peptide mass mapping and tandem mass spectrometry within the proteome of Mycobacterium tuberculosis.</title>
        <authorList>
            <person name="Rison S.C."/>
            <person name="Mattow J."/>
            <person name="Jungblut P.R."/>
            <person name="Stoker N.G."/>
        </authorList>
    </citation>
    <scope>IDENTIFICATION BY MASS SPECTROMETRY</scope>
    <scope>DETERMINATION OF TRANSLATIONAL START SITE</scope>
    <scope>CLEAVAGE OF INITIATOR METHIONINE</scope>
    <scope>ACETYLATION AT THR-2</scope>
    <source>
        <strain>ATCC 25618 / H37Rv</strain>
    </source>
</reference>
<reference key="3">
    <citation type="journal article" date="2008" name="BMC Syst. Biol.">
        <title>targetTB: a target identification pipeline for Mycobacterium tuberculosis through an interactome, reactome and genome-scale structural analysis.</title>
        <authorList>
            <person name="Raman K."/>
            <person name="Yeturu K."/>
            <person name="Chandra N."/>
        </authorList>
    </citation>
    <scope>IDENTIFICATION AS A DRUG TARGET [LARGE SCALE ANALYSIS]</scope>
</reference>
<reference key="4">
    <citation type="journal article" date="2010" name="PLoS ONE">
        <title>Prokaryotic ubiquitin-like protein (Pup) proteome of Mycobacterium tuberculosis.</title>
        <authorList>
            <person name="Festa R.A."/>
            <person name="McAllister F."/>
            <person name="Pearce M.J."/>
            <person name="Mintseris J."/>
            <person name="Burns K.E."/>
            <person name="Gygi S.P."/>
            <person name="Darwin K.H."/>
        </authorList>
    </citation>
    <scope>PUPYLATION AT LYS-314</scope>
    <scope>IDENTIFICATION BY MASS SPECTROMETRY</scope>
    <source>
        <strain>ATCC 25618 / H37Rv</strain>
    </source>
</reference>
<reference key="5">
    <citation type="journal article" date="2011" name="Mol. Cell. Proteomics">
        <title>Proteogenomic analysis of Mycobacterium tuberculosis by high resolution mass spectrometry.</title>
        <authorList>
            <person name="Kelkar D.S."/>
            <person name="Kumar D."/>
            <person name="Kumar P."/>
            <person name="Balakrishnan L."/>
            <person name="Muthusamy B."/>
            <person name="Yadav A.K."/>
            <person name="Shrivastava P."/>
            <person name="Marimuthu A."/>
            <person name="Anand S."/>
            <person name="Sundaram H."/>
            <person name="Kingsbury R."/>
            <person name="Harsha H.C."/>
            <person name="Nair B."/>
            <person name="Prasad T.S."/>
            <person name="Chauhan D.S."/>
            <person name="Katoch K."/>
            <person name="Katoch V.M."/>
            <person name="Kumar P."/>
            <person name="Chaerkady R."/>
            <person name="Ramachandran S."/>
            <person name="Dash D."/>
            <person name="Pandey A."/>
        </authorList>
    </citation>
    <scope>ACETYLATION [LARGE SCALE ANALYSIS] AT THR-2</scope>
    <scope>CLEAVAGE OF INITIATOR METHIONINE [LARGE SCALE ANALYSIS]</scope>
    <scope>IDENTIFICATION BY MASS SPECTROMETRY [LARGE SCALE ANALYSIS]</scope>
    <source>
        <strain>ATCC 25618 / H37Rv</strain>
    </source>
</reference>
<evidence type="ECO:0000255" key="1">
    <source>
        <dbReference type="HAMAP-Rule" id="MF_01107"/>
    </source>
</evidence>
<evidence type="ECO:0000269" key="2">
    <source>
    </source>
</evidence>
<evidence type="ECO:0000269" key="3">
    <source>
    </source>
</evidence>
<evidence type="ECO:0007744" key="4">
    <source>
    </source>
</evidence>
<evidence type="ECO:0007829" key="5">
    <source>
        <dbReference type="PDB" id="7NN4"/>
    </source>
</evidence>
<keyword id="KW-0002">3D-structure</keyword>
<keyword id="KW-0007">Acetylation</keyword>
<keyword id="KW-0028">Amino-acid biosynthesis</keyword>
<keyword id="KW-0032">Aminotransferase</keyword>
<keyword id="KW-0055">Arginine biosynthesis</keyword>
<keyword id="KW-0963">Cytoplasm</keyword>
<keyword id="KW-1017">Isopeptide bond</keyword>
<keyword id="KW-0663">Pyridoxal phosphate</keyword>
<keyword id="KW-1185">Reference proteome</keyword>
<keyword id="KW-0808">Transferase</keyword>
<keyword id="KW-0832">Ubl conjugation</keyword>
<accession>P9WPZ7</accession>
<accession>L0T8W6</accession>
<accession>P63568</accession>
<accession>P94990</accession>
<protein>
    <recommendedName>
        <fullName evidence="1">Acetylornithine aminotransferase</fullName>
        <shortName evidence="1">ACOAT</shortName>
        <ecNumber evidence="1">2.6.1.11</ecNumber>
    </recommendedName>
</protein>
<feature type="initiator methionine" description="Removed" evidence="2 4">
    <location>
        <position position="1"/>
    </location>
</feature>
<feature type="chain" id="PRO_0000112756" description="Acetylornithine aminotransferase">
    <location>
        <begin position="2"/>
        <end position="400"/>
    </location>
</feature>
<feature type="binding site" evidence="1">
    <location>
        <begin position="113"/>
        <end position="114"/>
    </location>
    <ligand>
        <name>pyridoxal 5'-phosphate</name>
        <dbReference type="ChEBI" id="CHEBI:597326"/>
    </ligand>
</feature>
<feature type="binding site" evidence="1">
    <location>
        <position position="139"/>
    </location>
    <ligand>
        <name>pyridoxal 5'-phosphate</name>
        <dbReference type="ChEBI" id="CHEBI:597326"/>
    </ligand>
</feature>
<feature type="binding site" evidence="1">
    <location>
        <position position="142"/>
    </location>
    <ligand>
        <name>N(2)-acetyl-L-ornithine</name>
        <dbReference type="ChEBI" id="CHEBI:57805"/>
    </ligand>
</feature>
<feature type="binding site" evidence="1">
    <location>
        <begin position="224"/>
        <end position="227"/>
    </location>
    <ligand>
        <name>pyridoxal 5'-phosphate</name>
        <dbReference type="ChEBI" id="CHEBI:597326"/>
    </ligand>
</feature>
<feature type="binding site" evidence="1">
    <location>
        <position position="281"/>
    </location>
    <ligand>
        <name>N(2)-acetyl-L-ornithine</name>
        <dbReference type="ChEBI" id="CHEBI:57805"/>
    </ligand>
</feature>
<feature type="binding site" evidence="1">
    <location>
        <position position="282"/>
    </location>
    <ligand>
        <name>pyridoxal 5'-phosphate</name>
        <dbReference type="ChEBI" id="CHEBI:597326"/>
    </ligand>
</feature>
<feature type="modified residue" description="N-acetylthreonine; partial" evidence="2 4">
    <location>
        <position position="2"/>
    </location>
</feature>
<feature type="modified residue" description="N6-(pyridoxal phosphate)lysine" evidence="1">
    <location>
        <position position="253"/>
    </location>
</feature>
<feature type="cross-link" description="Isoglutamyl lysine isopeptide (Lys-Gln) (interchain with Q-Cter in protein Pup)" evidence="3">
    <location>
        <position position="314"/>
    </location>
</feature>
<feature type="helix" evidence="5">
    <location>
        <begin position="8"/>
        <end position="18"/>
    </location>
</feature>
<feature type="strand" evidence="5">
    <location>
        <begin position="29"/>
        <end position="35"/>
    </location>
</feature>
<feature type="strand" evidence="5">
    <location>
        <begin position="37"/>
        <end position="40"/>
    </location>
</feature>
<feature type="strand" evidence="5">
    <location>
        <begin position="45"/>
        <end position="50"/>
    </location>
</feature>
<feature type="helix" evidence="5">
    <location>
        <begin position="51"/>
        <end position="54"/>
    </location>
</feature>
<feature type="helix" evidence="5">
    <location>
        <begin position="63"/>
        <end position="73"/>
    </location>
</feature>
<feature type="helix" evidence="5">
    <location>
        <begin position="86"/>
        <end position="99"/>
    </location>
</feature>
<feature type="strand" evidence="5">
    <location>
        <begin position="105"/>
        <end position="112"/>
    </location>
</feature>
<feature type="helix" evidence="5">
    <location>
        <begin position="113"/>
        <end position="125"/>
    </location>
</feature>
<feature type="turn" evidence="5">
    <location>
        <begin position="126"/>
        <end position="128"/>
    </location>
</feature>
<feature type="strand" evidence="5">
    <location>
        <begin position="131"/>
        <end position="135"/>
    </location>
</feature>
<feature type="helix" evidence="5">
    <location>
        <begin position="144"/>
        <end position="149"/>
    </location>
</feature>
<feature type="helix" evidence="5">
    <location>
        <begin position="153"/>
        <end position="156"/>
    </location>
</feature>
<feature type="helix" evidence="5">
    <location>
        <begin position="157"/>
        <end position="159"/>
    </location>
</feature>
<feature type="strand" evidence="5">
    <location>
        <begin position="166"/>
        <end position="169"/>
    </location>
</feature>
<feature type="helix" evidence="5">
    <location>
        <begin position="174"/>
        <end position="180"/>
    </location>
</feature>
<feature type="strand" evidence="5">
    <location>
        <begin position="185"/>
        <end position="190"/>
    </location>
</feature>
<feature type="strand" evidence="5">
    <location>
        <begin position="192"/>
        <end position="194"/>
    </location>
</feature>
<feature type="turn" evidence="5">
    <location>
        <begin position="195"/>
        <end position="198"/>
    </location>
</feature>
<feature type="helix" evidence="5">
    <location>
        <begin position="206"/>
        <end position="217"/>
    </location>
</feature>
<feature type="strand" evidence="5">
    <location>
        <begin position="220"/>
        <end position="224"/>
    </location>
</feature>
<feature type="turn" evidence="5">
    <location>
        <begin position="226"/>
        <end position="233"/>
    </location>
</feature>
<feature type="strand" evidence="5">
    <location>
        <begin position="234"/>
        <end position="237"/>
    </location>
</feature>
<feature type="helix" evidence="5">
    <location>
        <begin position="238"/>
        <end position="242"/>
    </location>
</feature>
<feature type="strand" evidence="5">
    <location>
        <begin position="247"/>
        <end position="251"/>
    </location>
</feature>
<feature type="turn" evidence="5">
    <location>
        <begin position="255"/>
        <end position="258"/>
    </location>
</feature>
<feature type="strand" evidence="5">
    <location>
        <begin position="262"/>
        <end position="267"/>
    </location>
</feature>
<feature type="helix" evidence="5">
    <location>
        <begin position="268"/>
        <end position="272"/>
    </location>
</feature>
<feature type="turn" evidence="5">
    <location>
        <begin position="282"/>
        <end position="285"/>
    </location>
</feature>
<feature type="helix" evidence="5">
    <location>
        <begin position="287"/>
        <end position="302"/>
    </location>
</feature>
<feature type="helix" evidence="5">
    <location>
        <begin position="305"/>
        <end position="322"/>
    </location>
</feature>
<feature type="strand" evidence="5">
    <location>
        <begin position="328"/>
        <end position="334"/>
    </location>
</feature>
<feature type="strand" evidence="5">
    <location>
        <begin position="337"/>
        <end position="345"/>
    </location>
</feature>
<feature type="helix" evidence="5">
    <location>
        <begin position="347"/>
        <end position="356"/>
    </location>
</feature>
<feature type="strand" evidence="5">
    <location>
        <begin position="362"/>
        <end position="365"/>
    </location>
</feature>
<feature type="strand" evidence="5">
    <location>
        <begin position="368"/>
        <end position="371"/>
    </location>
</feature>
<feature type="helix" evidence="5">
    <location>
        <begin position="379"/>
        <end position="396"/>
    </location>
</feature>
<proteinExistence type="evidence at protein level"/>
<name>ARGD_MYCTU</name>
<sequence>MTGASTTTATMRQRWQAVMMNNYGTPPIALASGDGAVVTDVDGRTYIDLLGGIAVNVLGHRHPAVIEAVTRQMSTLGHTSNLYATEPGIALAEELVALLGADQRTRVFFCNSGAEANEAAFKLSRLTGRTKLVAAHDAFHGRTMGSLALTGQPAKQTPFAPLPGDVTHVGYGDVDALAAAVDDHTAAVFLEPIMGESGVVVPPAGYLAAARDITARRGALLVLDEVQTGMGRTGAFFAHQHDGITPDVVTLAKGLGGGLPIGACLAVGPAAELLTPGLHGSTFGGNPVCAAAALAVLRVLASDGLVRRAEVLGKSLRHGIEALGHPLIDHVRGRGLLLGIALTAPHAKDAEATARDAGYLVNAAAPDVIRLAPPLIIAEAQLDGFVAALPAILDRAVGAP</sequence>
<dbReference type="EC" id="2.6.1.11" evidence="1"/>
<dbReference type="EMBL" id="AL123456">
    <property type="protein sequence ID" value="CCP44420.1"/>
    <property type="molecule type" value="Genomic_DNA"/>
</dbReference>
<dbReference type="PIR" id="B70621">
    <property type="entry name" value="B70621"/>
</dbReference>
<dbReference type="RefSeq" id="NP_216171.1">
    <property type="nucleotide sequence ID" value="NC_000962.3"/>
</dbReference>
<dbReference type="RefSeq" id="WP_003408163.1">
    <property type="nucleotide sequence ID" value="NZ_NVQJ01000069.1"/>
</dbReference>
<dbReference type="PDB" id="7NN1">
    <property type="method" value="X-ray"/>
    <property type="resolution" value="1.54 A"/>
    <property type="chains" value="A/B/C/D=1-400"/>
</dbReference>
<dbReference type="PDB" id="7NN4">
    <property type="method" value="X-ray"/>
    <property type="resolution" value="1.47 A"/>
    <property type="chains" value="A/B/C/D=1-400"/>
</dbReference>
<dbReference type="PDB" id="7NNC">
    <property type="method" value="X-ray"/>
    <property type="resolution" value="1.70 A"/>
    <property type="chains" value="A/B/C/D=1-400"/>
</dbReference>
<dbReference type="PDBsum" id="7NN1"/>
<dbReference type="PDBsum" id="7NN4"/>
<dbReference type="PDBsum" id="7NNC"/>
<dbReference type="SMR" id="P9WPZ7"/>
<dbReference type="FunCoup" id="P9WPZ7">
    <property type="interactions" value="551"/>
</dbReference>
<dbReference type="STRING" id="83332.Rv1655"/>
<dbReference type="iPTMnet" id="P9WPZ7"/>
<dbReference type="PaxDb" id="83332-Rv1655"/>
<dbReference type="DNASU" id="885187"/>
<dbReference type="GeneID" id="885187"/>
<dbReference type="KEGG" id="mtu:Rv1655"/>
<dbReference type="KEGG" id="mtv:RVBD_1655"/>
<dbReference type="TubercuList" id="Rv1655"/>
<dbReference type="eggNOG" id="COG4992">
    <property type="taxonomic scope" value="Bacteria"/>
</dbReference>
<dbReference type="InParanoid" id="P9WPZ7"/>
<dbReference type="OrthoDB" id="9801052at2"/>
<dbReference type="PhylomeDB" id="P9WPZ7"/>
<dbReference type="UniPathway" id="UPA00068">
    <property type="reaction ID" value="UER00109"/>
</dbReference>
<dbReference type="Proteomes" id="UP000001584">
    <property type="component" value="Chromosome"/>
</dbReference>
<dbReference type="GO" id="GO:0005737">
    <property type="term" value="C:cytoplasm"/>
    <property type="evidence" value="ECO:0007669"/>
    <property type="project" value="UniProtKB-SubCell"/>
</dbReference>
<dbReference type="GO" id="GO:0042802">
    <property type="term" value="F:identical protein binding"/>
    <property type="evidence" value="ECO:0000318"/>
    <property type="project" value="GO_Central"/>
</dbReference>
<dbReference type="GO" id="GO:0003992">
    <property type="term" value="F:N2-acetyl-L-ornithine:2-oxoglutarate 5-aminotransferase activity"/>
    <property type="evidence" value="ECO:0007669"/>
    <property type="project" value="UniProtKB-UniRule"/>
</dbReference>
<dbReference type="GO" id="GO:0030170">
    <property type="term" value="F:pyridoxal phosphate binding"/>
    <property type="evidence" value="ECO:0000318"/>
    <property type="project" value="GO_Central"/>
</dbReference>
<dbReference type="GO" id="GO:0006526">
    <property type="term" value="P:L-arginine biosynthetic process"/>
    <property type="evidence" value="ECO:0007669"/>
    <property type="project" value="UniProtKB-UniRule"/>
</dbReference>
<dbReference type="CDD" id="cd00610">
    <property type="entry name" value="OAT_like"/>
    <property type="match status" value="1"/>
</dbReference>
<dbReference type="FunFam" id="3.40.640.10:FF:000004">
    <property type="entry name" value="Acetylornithine aminotransferase"/>
    <property type="match status" value="1"/>
</dbReference>
<dbReference type="Gene3D" id="3.90.1150.10">
    <property type="entry name" value="Aspartate Aminotransferase, domain 1"/>
    <property type="match status" value="1"/>
</dbReference>
<dbReference type="Gene3D" id="3.40.640.10">
    <property type="entry name" value="Type I PLP-dependent aspartate aminotransferase-like (Major domain)"/>
    <property type="match status" value="1"/>
</dbReference>
<dbReference type="HAMAP" id="MF_01107">
    <property type="entry name" value="ArgD_aminotrans_3"/>
    <property type="match status" value="1"/>
</dbReference>
<dbReference type="InterPro" id="IPR004636">
    <property type="entry name" value="AcOrn/SuccOrn_fam"/>
</dbReference>
<dbReference type="InterPro" id="IPR005814">
    <property type="entry name" value="Aminotrans_3"/>
</dbReference>
<dbReference type="InterPro" id="IPR049704">
    <property type="entry name" value="Aminotrans_3_PPA_site"/>
</dbReference>
<dbReference type="InterPro" id="IPR050103">
    <property type="entry name" value="Class-III_PLP-dep_AT"/>
</dbReference>
<dbReference type="InterPro" id="IPR015424">
    <property type="entry name" value="PyrdxlP-dep_Trfase"/>
</dbReference>
<dbReference type="InterPro" id="IPR015421">
    <property type="entry name" value="PyrdxlP-dep_Trfase_major"/>
</dbReference>
<dbReference type="InterPro" id="IPR015422">
    <property type="entry name" value="PyrdxlP-dep_Trfase_small"/>
</dbReference>
<dbReference type="NCBIfam" id="TIGR00707">
    <property type="entry name" value="argD"/>
    <property type="match status" value="1"/>
</dbReference>
<dbReference type="NCBIfam" id="NF002874">
    <property type="entry name" value="PRK03244.1"/>
    <property type="match status" value="1"/>
</dbReference>
<dbReference type="PANTHER" id="PTHR11986:SF79">
    <property type="entry name" value="ACETYLORNITHINE AMINOTRANSFERASE, MITOCHONDRIAL"/>
    <property type="match status" value="1"/>
</dbReference>
<dbReference type="PANTHER" id="PTHR11986">
    <property type="entry name" value="AMINOTRANSFERASE CLASS III"/>
    <property type="match status" value="1"/>
</dbReference>
<dbReference type="Pfam" id="PF00202">
    <property type="entry name" value="Aminotran_3"/>
    <property type="match status" value="1"/>
</dbReference>
<dbReference type="PIRSF" id="PIRSF000521">
    <property type="entry name" value="Transaminase_4ab_Lys_Orn"/>
    <property type="match status" value="1"/>
</dbReference>
<dbReference type="SUPFAM" id="SSF53383">
    <property type="entry name" value="PLP-dependent transferases"/>
    <property type="match status" value="1"/>
</dbReference>
<dbReference type="PROSITE" id="PS00600">
    <property type="entry name" value="AA_TRANSFER_CLASS_3"/>
    <property type="match status" value="1"/>
</dbReference>